<comment type="function">
    <text evidence="1">Catalyzes the phosphorylation of D-fructose 6-phosphate to fructose 1,6-bisphosphate by ATP, the first committing step of glycolysis.</text>
</comment>
<comment type="catalytic activity">
    <reaction evidence="1">
        <text>beta-D-fructose 6-phosphate + ATP = beta-D-fructose 1,6-bisphosphate + ADP + H(+)</text>
        <dbReference type="Rhea" id="RHEA:16109"/>
        <dbReference type="ChEBI" id="CHEBI:15378"/>
        <dbReference type="ChEBI" id="CHEBI:30616"/>
        <dbReference type="ChEBI" id="CHEBI:32966"/>
        <dbReference type="ChEBI" id="CHEBI:57634"/>
        <dbReference type="ChEBI" id="CHEBI:456216"/>
        <dbReference type="EC" id="2.7.1.11"/>
    </reaction>
</comment>
<comment type="cofactor">
    <cofactor evidence="1">
        <name>Mg(2+)</name>
        <dbReference type="ChEBI" id="CHEBI:18420"/>
    </cofactor>
</comment>
<comment type="activity regulation">
    <text evidence="1">Allosterically activated by ADP and other diphosphonucleosides, and allosterically inhibited by phosphoenolpyruvate.</text>
</comment>
<comment type="pathway">
    <text evidence="1">Carbohydrate degradation; glycolysis; D-glyceraldehyde 3-phosphate and glycerone phosphate from D-glucose: step 3/4.</text>
</comment>
<comment type="subunit">
    <text evidence="1">Homotetramer.</text>
</comment>
<comment type="subcellular location">
    <subcellularLocation>
        <location evidence="1">Cytoplasm</location>
    </subcellularLocation>
</comment>
<comment type="similarity">
    <text evidence="1">Belongs to the phosphofructokinase type A (PFKA) family. ATP-dependent PFK group I subfamily. Prokaryotic clade 'B1' sub-subfamily.</text>
</comment>
<reference key="1">
    <citation type="journal article" date="2006" name="Proc. Natl. Acad. Sci. U.S.A.">
        <title>Comparative genomics of the lactic acid bacteria.</title>
        <authorList>
            <person name="Makarova K.S."/>
            <person name="Slesarev A."/>
            <person name="Wolf Y.I."/>
            <person name="Sorokin A."/>
            <person name="Mirkin B."/>
            <person name="Koonin E.V."/>
            <person name="Pavlov A."/>
            <person name="Pavlova N."/>
            <person name="Karamychev V."/>
            <person name="Polouchine N."/>
            <person name="Shakhova V."/>
            <person name="Grigoriev I."/>
            <person name="Lou Y."/>
            <person name="Rohksar D."/>
            <person name="Lucas S."/>
            <person name="Huang K."/>
            <person name="Goodstein D.M."/>
            <person name="Hawkins T."/>
            <person name="Plengvidhya V."/>
            <person name="Welker D."/>
            <person name="Hughes J."/>
            <person name="Goh Y."/>
            <person name="Benson A."/>
            <person name="Baldwin K."/>
            <person name="Lee J.-H."/>
            <person name="Diaz-Muniz I."/>
            <person name="Dosti B."/>
            <person name="Smeianov V."/>
            <person name="Wechter W."/>
            <person name="Barabote R."/>
            <person name="Lorca G."/>
            <person name="Altermann E."/>
            <person name="Barrangou R."/>
            <person name="Ganesan B."/>
            <person name="Xie Y."/>
            <person name="Rawsthorne H."/>
            <person name="Tamir D."/>
            <person name="Parker C."/>
            <person name="Breidt F."/>
            <person name="Broadbent J.R."/>
            <person name="Hutkins R."/>
            <person name="O'Sullivan D."/>
            <person name="Steele J."/>
            <person name="Unlu G."/>
            <person name="Saier M.H. Jr."/>
            <person name="Klaenhammer T."/>
            <person name="Richardson P."/>
            <person name="Kozyavkin S."/>
            <person name="Weimer B.C."/>
            <person name="Mills D.A."/>
        </authorList>
    </citation>
    <scope>NUCLEOTIDE SEQUENCE [LARGE SCALE GENOMIC DNA]</scope>
    <source>
        <strain>ATCC 334 / BCRC 17002 / CCUG 31169 / CIP 107868 / KCTC 3260 / NRRL B-441</strain>
    </source>
</reference>
<name>PFKA_LACP3</name>
<proteinExistence type="inferred from homology"/>
<dbReference type="EC" id="2.7.1.11" evidence="1"/>
<dbReference type="EMBL" id="CP000423">
    <property type="protein sequence ID" value="ABJ70142.1"/>
    <property type="molecule type" value="Genomic_DNA"/>
</dbReference>
<dbReference type="RefSeq" id="WP_003565329.1">
    <property type="nucleotide sequence ID" value="NC_008526.1"/>
</dbReference>
<dbReference type="RefSeq" id="YP_806584.1">
    <property type="nucleotide sequence ID" value="NC_008526.1"/>
</dbReference>
<dbReference type="SMR" id="Q039I0"/>
<dbReference type="STRING" id="321967.LSEI_1364"/>
<dbReference type="PaxDb" id="321967-LSEI_1364"/>
<dbReference type="GeneID" id="57090028"/>
<dbReference type="KEGG" id="lca:LSEI_1364"/>
<dbReference type="PATRIC" id="fig|321967.11.peg.1343"/>
<dbReference type="HOGENOM" id="CLU_020655_0_1_9"/>
<dbReference type="UniPathway" id="UPA00109">
    <property type="reaction ID" value="UER00182"/>
</dbReference>
<dbReference type="Proteomes" id="UP000001651">
    <property type="component" value="Chromosome"/>
</dbReference>
<dbReference type="GO" id="GO:0005945">
    <property type="term" value="C:6-phosphofructokinase complex"/>
    <property type="evidence" value="ECO:0007669"/>
    <property type="project" value="TreeGrafter"/>
</dbReference>
<dbReference type="GO" id="GO:0003872">
    <property type="term" value="F:6-phosphofructokinase activity"/>
    <property type="evidence" value="ECO:0007669"/>
    <property type="project" value="UniProtKB-UniRule"/>
</dbReference>
<dbReference type="GO" id="GO:0016208">
    <property type="term" value="F:AMP binding"/>
    <property type="evidence" value="ECO:0007669"/>
    <property type="project" value="TreeGrafter"/>
</dbReference>
<dbReference type="GO" id="GO:0005524">
    <property type="term" value="F:ATP binding"/>
    <property type="evidence" value="ECO:0007669"/>
    <property type="project" value="UniProtKB-KW"/>
</dbReference>
<dbReference type="GO" id="GO:0070095">
    <property type="term" value="F:fructose-6-phosphate binding"/>
    <property type="evidence" value="ECO:0007669"/>
    <property type="project" value="TreeGrafter"/>
</dbReference>
<dbReference type="GO" id="GO:0042802">
    <property type="term" value="F:identical protein binding"/>
    <property type="evidence" value="ECO:0007669"/>
    <property type="project" value="TreeGrafter"/>
</dbReference>
<dbReference type="GO" id="GO:0046872">
    <property type="term" value="F:metal ion binding"/>
    <property type="evidence" value="ECO:0007669"/>
    <property type="project" value="UniProtKB-KW"/>
</dbReference>
<dbReference type="GO" id="GO:0048029">
    <property type="term" value="F:monosaccharide binding"/>
    <property type="evidence" value="ECO:0007669"/>
    <property type="project" value="TreeGrafter"/>
</dbReference>
<dbReference type="GO" id="GO:0061621">
    <property type="term" value="P:canonical glycolysis"/>
    <property type="evidence" value="ECO:0007669"/>
    <property type="project" value="TreeGrafter"/>
</dbReference>
<dbReference type="GO" id="GO:0030388">
    <property type="term" value="P:fructose 1,6-bisphosphate metabolic process"/>
    <property type="evidence" value="ECO:0007669"/>
    <property type="project" value="TreeGrafter"/>
</dbReference>
<dbReference type="GO" id="GO:0006002">
    <property type="term" value="P:fructose 6-phosphate metabolic process"/>
    <property type="evidence" value="ECO:0007669"/>
    <property type="project" value="InterPro"/>
</dbReference>
<dbReference type="FunFam" id="3.40.50.450:FF:000001">
    <property type="entry name" value="ATP-dependent 6-phosphofructokinase"/>
    <property type="match status" value="1"/>
</dbReference>
<dbReference type="FunFam" id="3.40.50.460:FF:000002">
    <property type="entry name" value="ATP-dependent 6-phosphofructokinase"/>
    <property type="match status" value="1"/>
</dbReference>
<dbReference type="Gene3D" id="3.40.50.450">
    <property type="match status" value="1"/>
</dbReference>
<dbReference type="Gene3D" id="3.40.50.460">
    <property type="entry name" value="Phosphofructokinase domain"/>
    <property type="match status" value="1"/>
</dbReference>
<dbReference type="HAMAP" id="MF_00339">
    <property type="entry name" value="Phosphofructokinase_I_B1"/>
    <property type="match status" value="1"/>
</dbReference>
<dbReference type="InterPro" id="IPR022953">
    <property type="entry name" value="ATP_PFK"/>
</dbReference>
<dbReference type="InterPro" id="IPR012003">
    <property type="entry name" value="ATP_PFK_prok-type"/>
</dbReference>
<dbReference type="InterPro" id="IPR012828">
    <property type="entry name" value="PFKA_ATP_prok"/>
</dbReference>
<dbReference type="InterPro" id="IPR000023">
    <property type="entry name" value="Phosphofructokinase_dom"/>
</dbReference>
<dbReference type="InterPro" id="IPR035966">
    <property type="entry name" value="PKF_sf"/>
</dbReference>
<dbReference type="NCBIfam" id="TIGR02482">
    <property type="entry name" value="PFKA_ATP"/>
    <property type="match status" value="1"/>
</dbReference>
<dbReference type="NCBIfam" id="NF002872">
    <property type="entry name" value="PRK03202.1"/>
    <property type="match status" value="1"/>
</dbReference>
<dbReference type="PANTHER" id="PTHR13697:SF4">
    <property type="entry name" value="ATP-DEPENDENT 6-PHOSPHOFRUCTOKINASE"/>
    <property type="match status" value="1"/>
</dbReference>
<dbReference type="PANTHER" id="PTHR13697">
    <property type="entry name" value="PHOSPHOFRUCTOKINASE"/>
    <property type="match status" value="1"/>
</dbReference>
<dbReference type="Pfam" id="PF00365">
    <property type="entry name" value="PFK"/>
    <property type="match status" value="1"/>
</dbReference>
<dbReference type="PIRSF" id="PIRSF000532">
    <property type="entry name" value="ATP_PFK_prok"/>
    <property type="match status" value="1"/>
</dbReference>
<dbReference type="PRINTS" id="PR00476">
    <property type="entry name" value="PHFRCTKINASE"/>
</dbReference>
<dbReference type="SUPFAM" id="SSF53784">
    <property type="entry name" value="Phosphofructokinase"/>
    <property type="match status" value="1"/>
</dbReference>
<evidence type="ECO:0000255" key="1">
    <source>
        <dbReference type="HAMAP-Rule" id="MF_00339"/>
    </source>
</evidence>
<accession>Q039I0</accession>
<organism>
    <name type="scientific">Lacticaseibacillus paracasei (strain ATCC 334 / BCRC 17002 / CCUG 31169 / CIP 107868 / KCTC 3260 / NRRL B-441)</name>
    <name type="common">Lactobacillus paracasei</name>
    <dbReference type="NCBI Taxonomy" id="321967"/>
    <lineage>
        <taxon>Bacteria</taxon>
        <taxon>Bacillati</taxon>
        <taxon>Bacillota</taxon>
        <taxon>Bacilli</taxon>
        <taxon>Lactobacillales</taxon>
        <taxon>Lactobacillaceae</taxon>
        <taxon>Lacticaseibacillus</taxon>
    </lineage>
</organism>
<protein>
    <recommendedName>
        <fullName evidence="1">ATP-dependent 6-phosphofructokinase</fullName>
        <shortName evidence="1">ATP-PFK</shortName>
        <shortName evidence="1">Phosphofructokinase</shortName>
        <ecNumber evidence="1">2.7.1.11</ecNumber>
    </recommendedName>
    <alternativeName>
        <fullName evidence="1">Phosphohexokinase</fullName>
    </alternativeName>
</protein>
<keyword id="KW-0021">Allosteric enzyme</keyword>
<keyword id="KW-0067">ATP-binding</keyword>
<keyword id="KW-0963">Cytoplasm</keyword>
<keyword id="KW-0324">Glycolysis</keyword>
<keyword id="KW-0418">Kinase</keyword>
<keyword id="KW-0460">Magnesium</keyword>
<keyword id="KW-0479">Metal-binding</keyword>
<keyword id="KW-0547">Nucleotide-binding</keyword>
<keyword id="KW-1185">Reference proteome</keyword>
<keyword id="KW-0808">Transferase</keyword>
<sequence length="319" mass="34230">MKRIGILTSGGDAPGMNAAVRAVARKAMHEGLEVYGINYGFAGLVAGDIFKMNESTVGDKIQRGGTMLYSARYPQFAQEEGQLRGVEQLNKFGIEALVVIGGDGSYHGALALTRHGFNTIGLPGTIDNDIPYTDFTIGFDTAVNTVVEAVDRLRDTAASHERTFVIEVMGREAGDIALWSGVAGGAEDVIIPEHDFDVKKIASKLQSSRERGQKHAVILLAEGVMHADQFAKELAAHGDFQLRSTVLGHIVRGGAPSARDRVLASQMGSYAVELLLQGKGALAVGIENNKITAHDVRTLFDAKHHAELSLYTLAEELTF</sequence>
<feature type="chain" id="PRO_1000059770" description="ATP-dependent 6-phosphofructokinase">
    <location>
        <begin position="1"/>
        <end position="319"/>
    </location>
</feature>
<feature type="active site" description="Proton acceptor" evidence="1">
    <location>
        <position position="127"/>
    </location>
</feature>
<feature type="binding site" evidence="1">
    <location>
        <position position="11"/>
    </location>
    <ligand>
        <name>ATP</name>
        <dbReference type="ChEBI" id="CHEBI:30616"/>
    </ligand>
</feature>
<feature type="binding site" evidence="1">
    <location>
        <begin position="21"/>
        <end position="25"/>
    </location>
    <ligand>
        <name>ADP</name>
        <dbReference type="ChEBI" id="CHEBI:456216"/>
        <note>allosteric activator; ligand shared between dimeric partners</note>
    </ligand>
</feature>
<feature type="binding site" evidence="1">
    <location>
        <begin position="72"/>
        <end position="73"/>
    </location>
    <ligand>
        <name>ATP</name>
        <dbReference type="ChEBI" id="CHEBI:30616"/>
    </ligand>
</feature>
<feature type="binding site" evidence="1">
    <location>
        <begin position="102"/>
        <end position="105"/>
    </location>
    <ligand>
        <name>ATP</name>
        <dbReference type="ChEBI" id="CHEBI:30616"/>
    </ligand>
</feature>
<feature type="binding site" evidence="1">
    <location>
        <position position="103"/>
    </location>
    <ligand>
        <name>Mg(2+)</name>
        <dbReference type="ChEBI" id="CHEBI:18420"/>
        <note>catalytic</note>
    </ligand>
</feature>
<feature type="binding site" description="in other chain" evidence="1">
    <location>
        <begin position="125"/>
        <end position="127"/>
    </location>
    <ligand>
        <name>substrate</name>
        <note>ligand shared between dimeric partners</note>
    </ligand>
</feature>
<feature type="binding site" description="in other chain" evidence="1">
    <location>
        <position position="154"/>
    </location>
    <ligand>
        <name>ADP</name>
        <dbReference type="ChEBI" id="CHEBI:456216"/>
        <note>allosteric activator; ligand shared between dimeric partners</note>
    </ligand>
</feature>
<feature type="binding site" evidence="1">
    <location>
        <position position="162"/>
    </location>
    <ligand>
        <name>substrate</name>
        <note>ligand shared between dimeric partners</note>
    </ligand>
</feature>
<feature type="binding site" description="in other chain" evidence="1">
    <location>
        <begin position="169"/>
        <end position="171"/>
    </location>
    <ligand>
        <name>substrate</name>
        <note>ligand shared between dimeric partners</note>
    </ligand>
</feature>
<feature type="binding site" description="in other chain" evidence="1">
    <location>
        <begin position="185"/>
        <end position="187"/>
    </location>
    <ligand>
        <name>ADP</name>
        <dbReference type="ChEBI" id="CHEBI:456216"/>
        <note>allosteric activator; ligand shared between dimeric partners</note>
    </ligand>
</feature>
<feature type="binding site" description="in other chain" evidence="1">
    <location>
        <position position="211"/>
    </location>
    <ligand>
        <name>ADP</name>
        <dbReference type="ChEBI" id="CHEBI:456216"/>
        <note>allosteric activator; ligand shared between dimeric partners</note>
    </ligand>
</feature>
<feature type="binding site" description="in other chain" evidence="1">
    <location>
        <position position="222"/>
    </location>
    <ligand>
        <name>substrate</name>
        <note>ligand shared between dimeric partners</note>
    </ligand>
</feature>
<feature type="binding site" evidence="1">
    <location>
        <position position="243"/>
    </location>
    <ligand>
        <name>substrate</name>
        <note>ligand shared between dimeric partners</note>
    </ligand>
</feature>
<feature type="binding site" description="in other chain" evidence="1">
    <location>
        <begin position="249"/>
        <end position="252"/>
    </location>
    <ligand>
        <name>substrate</name>
        <note>ligand shared between dimeric partners</note>
    </ligand>
</feature>
<gene>
    <name evidence="1" type="primary">pfkA</name>
    <name type="ordered locus">LSEI_1364</name>
</gene>